<proteinExistence type="inferred from homology"/>
<keyword id="KW-0687">Ribonucleoprotein</keyword>
<keyword id="KW-0689">Ribosomal protein</keyword>
<accession>A6UCX4</accession>
<name>RL36_SINMW</name>
<reference key="1">
    <citation type="submission" date="2007-06" db="EMBL/GenBank/DDBJ databases">
        <title>Complete sequence of Sinorhizobium medicae WSM419 chromosome.</title>
        <authorList>
            <consortium name="US DOE Joint Genome Institute"/>
            <person name="Copeland A."/>
            <person name="Lucas S."/>
            <person name="Lapidus A."/>
            <person name="Barry K."/>
            <person name="Glavina del Rio T."/>
            <person name="Dalin E."/>
            <person name="Tice H."/>
            <person name="Pitluck S."/>
            <person name="Chain P."/>
            <person name="Malfatti S."/>
            <person name="Shin M."/>
            <person name="Vergez L."/>
            <person name="Schmutz J."/>
            <person name="Larimer F."/>
            <person name="Land M."/>
            <person name="Hauser L."/>
            <person name="Kyrpides N."/>
            <person name="Mikhailova N."/>
            <person name="Reeve W.G."/>
            <person name="Richardson P."/>
        </authorList>
    </citation>
    <scope>NUCLEOTIDE SEQUENCE [LARGE SCALE GENOMIC DNA]</scope>
    <source>
        <strain>WSM419</strain>
    </source>
</reference>
<protein>
    <recommendedName>
        <fullName evidence="1">Large ribosomal subunit protein bL36</fullName>
    </recommendedName>
    <alternativeName>
        <fullName evidence="2">50S ribosomal protein L36</fullName>
    </alternativeName>
</protein>
<organism>
    <name type="scientific">Sinorhizobium medicae (strain WSM419)</name>
    <name type="common">Ensifer medicae</name>
    <dbReference type="NCBI Taxonomy" id="366394"/>
    <lineage>
        <taxon>Bacteria</taxon>
        <taxon>Pseudomonadati</taxon>
        <taxon>Pseudomonadota</taxon>
        <taxon>Alphaproteobacteria</taxon>
        <taxon>Hyphomicrobiales</taxon>
        <taxon>Rhizobiaceae</taxon>
        <taxon>Sinorhizobium/Ensifer group</taxon>
        <taxon>Sinorhizobium</taxon>
    </lineage>
</organism>
<gene>
    <name evidence="1" type="primary">rpmJ</name>
    <name type="ordered locus">Smed_2674</name>
</gene>
<comment type="similarity">
    <text evidence="1">Belongs to the bacterial ribosomal protein bL36 family.</text>
</comment>
<sequence>MKIKNSLKSLKTRHRENRLVRRKGRVYIINKLNPRFKARQG</sequence>
<evidence type="ECO:0000255" key="1">
    <source>
        <dbReference type="HAMAP-Rule" id="MF_00251"/>
    </source>
</evidence>
<evidence type="ECO:0000305" key="2"/>
<dbReference type="EMBL" id="CP000738">
    <property type="protein sequence ID" value="ABR61504.1"/>
    <property type="molecule type" value="Genomic_DNA"/>
</dbReference>
<dbReference type="RefSeq" id="YP_001328339.1">
    <property type="nucleotide sequence ID" value="NC_009636.1"/>
</dbReference>
<dbReference type="SMR" id="A6UCX4"/>
<dbReference type="STRING" id="366394.Smed_2674"/>
<dbReference type="KEGG" id="smd:Smed_2674"/>
<dbReference type="PATRIC" id="fig|366394.8.peg.5875"/>
<dbReference type="eggNOG" id="COG0257">
    <property type="taxonomic scope" value="Bacteria"/>
</dbReference>
<dbReference type="HOGENOM" id="CLU_135723_3_0_5"/>
<dbReference type="OrthoDB" id="9801558at2"/>
<dbReference type="Proteomes" id="UP000001108">
    <property type="component" value="Chromosome"/>
</dbReference>
<dbReference type="GO" id="GO:1990904">
    <property type="term" value="C:ribonucleoprotein complex"/>
    <property type="evidence" value="ECO:0007669"/>
    <property type="project" value="UniProtKB-KW"/>
</dbReference>
<dbReference type="GO" id="GO:0005840">
    <property type="term" value="C:ribosome"/>
    <property type="evidence" value="ECO:0007669"/>
    <property type="project" value="UniProtKB-KW"/>
</dbReference>
<dbReference type="GO" id="GO:0003735">
    <property type="term" value="F:structural constituent of ribosome"/>
    <property type="evidence" value="ECO:0007669"/>
    <property type="project" value="InterPro"/>
</dbReference>
<dbReference type="GO" id="GO:0006412">
    <property type="term" value="P:translation"/>
    <property type="evidence" value="ECO:0007669"/>
    <property type="project" value="UniProtKB-UniRule"/>
</dbReference>
<dbReference type="HAMAP" id="MF_00251">
    <property type="entry name" value="Ribosomal_bL36"/>
    <property type="match status" value="1"/>
</dbReference>
<dbReference type="InterPro" id="IPR000473">
    <property type="entry name" value="Ribosomal_bL36"/>
</dbReference>
<dbReference type="InterPro" id="IPR035977">
    <property type="entry name" value="Ribosomal_bL36_sp"/>
</dbReference>
<dbReference type="InterPro" id="IPR047621">
    <property type="entry name" value="Ribosomal_L36_bact"/>
</dbReference>
<dbReference type="NCBIfam" id="NF002021">
    <property type="entry name" value="PRK00831.1"/>
    <property type="match status" value="1"/>
</dbReference>
<dbReference type="NCBIfam" id="TIGR01022">
    <property type="entry name" value="rpmJ_bact"/>
    <property type="match status" value="1"/>
</dbReference>
<dbReference type="PANTHER" id="PTHR47781">
    <property type="entry name" value="50S RIBOSOMAL PROTEIN L36 2"/>
    <property type="match status" value="1"/>
</dbReference>
<dbReference type="PANTHER" id="PTHR47781:SF1">
    <property type="entry name" value="LARGE RIBOSOMAL SUBUNIT PROTEIN BL36B"/>
    <property type="match status" value="1"/>
</dbReference>
<dbReference type="Pfam" id="PF00444">
    <property type="entry name" value="Ribosomal_L36"/>
    <property type="match status" value="1"/>
</dbReference>
<dbReference type="SUPFAM" id="SSF57840">
    <property type="entry name" value="Ribosomal protein L36"/>
    <property type="match status" value="1"/>
</dbReference>
<dbReference type="PROSITE" id="PS00828">
    <property type="entry name" value="RIBOSOMAL_L36"/>
    <property type="match status" value="1"/>
</dbReference>
<feature type="chain" id="PRO_1000003417" description="Large ribosomal subunit protein bL36">
    <location>
        <begin position="1"/>
        <end position="41"/>
    </location>
</feature>